<gene>
    <name type="primary">sphX</name>
    <name type="ordered locus">Synpcc7942_2445</name>
</gene>
<feature type="signal peptide" evidence="1">
    <location>
        <begin position="1"/>
        <end position="30"/>
    </location>
</feature>
<feature type="chain" id="PRO_0000022395" description="Protein SphX">
    <location>
        <begin position="31"/>
        <end position="337"/>
    </location>
</feature>
<sequence>MTTLKPALRRAAVLLPIAAVASSLFPIQEASAQRALVTADGSSTVFPISEAVAEEFQKRNKNINVTVGVSGTGGGFKRFCNGEIDIANASRPIKKEEVEACRKKGIRYIELPVAFDALTVVVNKSNPVNSITTAELAKIFGRDAEKKTTNWRQVKSSFPNLPLRVYAPGTDSGTYDYFNEAILNKKGTRGDLTASEDDNILVQGVSRDRGGIGFFGFSYYEENKGKLKALAVVNSNGKAVMPSVQNVLNGTYDPLARPVFIYVSEQAAKKANVRSFVNFYLQNAGKLSREVGFVPLPAKAYTAATQRFRSNKTGTVFAGKSLVGGSIEDLLKAEGIN</sequence>
<reference key="1">
    <citation type="journal article" date="1994" name="Mol. Microbiol.">
        <title>A novel gene whose expression is regulated by the response-regulator, SphR, in response to phosphate limitation in Synechococcus species PCC7942.</title>
        <authorList>
            <person name="Aiba H."/>
            <person name="Mizuno T."/>
        </authorList>
    </citation>
    <scope>NUCLEOTIDE SEQUENCE [GENOMIC DNA]</scope>
    <scope>PROTEIN SEQUENCE OF 100-119; 181-198 AND 291-304</scope>
</reference>
<reference key="2">
    <citation type="submission" date="2005-08" db="EMBL/GenBank/DDBJ databases">
        <title>Complete sequence of chromosome 1 of Synechococcus elongatus PCC 7942.</title>
        <authorList>
            <consortium name="US DOE Joint Genome Institute"/>
            <person name="Copeland A."/>
            <person name="Lucas S."/>
            <person name="Lapidus A."/>
            <person name="Barry K."/>
            <person name="Detter J.C."/>
            <person name="Glavina T."/>
            <person name="Hammon N."/>
            <person name="Israni S."/>
            <person name="Pitluck S."/>
            <person name="Schmutz J."/>
            <person name="Larimer F."/>
            <person name="Land M."/>
            <person name="Kyrpides N."/>
            <person name="Lykidis A."/>
            <person name="Golden S."/>
            <person name="Richardson P."/>
        </authorList>
    </citation>
    <scope>NUCLEOTIDE SEQUENCE [LARGE SCALE GENOMIC DNA]</scope>
    <source>
        <strain>ATCC 33912 / PCC 7942 / FACHB-805</strain>
    </source>
</reference>
<protein>
    <recommendedName>
        <fullName>Protein SphX</fullName>
    </recommendedName>
</protein>
<dbReference type="EMBL" id="D26161">
    <property type="protein sequence ID" value="BAA05147.1"/>
    <property type="molecule type" value="Genomic_DNA"/>
</dbReference>
<dbReference type="EMBL" id="CP000100">
    <property type="protein sequence ID" value="ABB58475.1"/>
    <property type="molecule type" value="Genomic_DNA"/>
</dbReference>
<dbReference type="RefSeq" id="WP_011243971.1">
    <property type="nucleotide sequence ID" value="NZ_JACJTX010000001.1"/>
</dbReference>
<dbReference type="SMR" id="P39665"/>
<dbReference type="STRING" id="1140.Synpcc7942_2445"/>
<dbReference type="PaxDb" id="1140-Synpcc7942_2445"/>
<dbReference type="KEGG" id="syf:Synpcc7942_2445"/>
<dbReference type="eggNOG" id="COG0226">
    <property type="taxonomic scope" value="Bacteria"/>
</dbReference>
<dbReference type="HOGENOM" id="CLU_026228_1_0_3"/>
<dbReference type="OrthoDB" id="9790048at2"/>
<dbReference type="BioCyc" id="SYNEL:SYNPCC7942_2445-MONOMER"/>
<dbReference type="Proteomes" id="UP000889800">
    <property type="component" value="Chromosome"/>
</dbReference>
<dbReference type="GO" id="GO:0005886">
    <property type="term" value="C:plasma membrane"/>
    <property type="evidence" value="ECO:0007669"/>
    <property type="project" value="UniProtKB-SubCell"/>
</dbReference>
<dbReference type="GO" id="GO:0042301">
    <property type="term" value="F:phosphate ion binding"/>
    <property type="evidence" value="ECO:0007669"/>
    <property type="project" value="InterPro"/>
</dbReference>
<dbReference type="CDD" id="cd13654">
    <property type="entry name" value="PBP2_phosphate_like_2"/>
    <property type="match status" value="1"/>
</dbReference>
<dbReference type="FunFam" id="3.40.190.10:FF:000055">
    <property type="entry name" value="Phosphate ABC transporter, phosphate-binding protein"/>
    <property type="match status" value="1"/>
</dbReference>
<dbReference type="Gene3D" id="3.40.190.10">
    <property type="entry name" value="Periplasmic binding protein-like II"/>
    <property type="match status" value="2"/>
</dbReference>
<dbReference type="InterPro" id="IPR024370">
    <property type="entry name" value="PBP_domain"/>
</dbReference>
<dbReference type="InterPro" id="IPR011862">
    <property type="entry name" value="Phos-bd"/>
</dbReference>
<dbReference type="InterPro" id="IPR050811">
    <property type="entry name" value="Phosphate_ABC_transporter"/>
</dbReference>
<dbReference type="NCBIfam" id="TIGR02136">
    <property type="entry name" value="ptsS_2"/>
    <property type="match status" value="1"/>
</dbReference>
<dbReference type="PANTHER" id="PTHR30570">
    <property type="entry name" value="PERIPLASMIC PHOSPHATE BINDING COMPONENT OF PHOSPHATE ABC TRANSPORTER"/>
    <property type="match status" value="1"/>
</dbReference>
<dbReference type="PANTHER" id="PTHR30570:SF1">
    <property type="entry name" value="PHOSPHATE-BINDING PROTEIN PSTS"/>
    <property type="match status" value="1"/>
</dbReference>
<dbReference type="Pfam" id="PF12849">
    <property type="entry name" value="PBP_like_2"/>
    <property type="match status" value="1"/>
</dbReference>
<dbReference type="SUPFAM" id="SSF53850">
    <property type="entry name" value="Periplasmic binding protein-like II"/>
    <property type="match status" value="1"/>
</dbReference>
<organism>
    <name type="scientific">Synechococcus elongatus (strain ATCC 33912 / PCC 7942 / FACHB-805)</name>
    <name type="common">Anacystis nidulans R2</name>
    <dbReference type="NCBI Taxonomy" id="1140"/>
    <lineage>
        <taxon>Bacteria</taxon>
        <taxon>Bacillati</taxon>
        <taxon>Cyanobacteriota</taxon>
        <taxon>Cyanophyceae</taxon>
        <taxon>Synechococcales</taxon>
        <taxon>Synechococcaceae</taxon>
        <taxon>Synechococcus</taxon>
    </lineage>
</organism>
<keyword id="KW-0997">Cell inner membrane</keyword>
<keyword id="KW-1003">Cell membrane</keyword>
<keyword id="KW-0903">Direct protein sequencing</keyword>
<keyword id="KW-0472">Membrane</keyword>
<keyword id="KW-1185">Reference proteome</keyword>
<keyword id="KW-0732">Signal</keyword>
<keyword id="KW-0813">Transport</keyword>
<name>SPHX_SYNE7</name>
<evidence type="ECO:0000255" key="1"/>
<evidence type="ECO:0000305" key="2"/>
<proteinExistence type="evidence at protein level"/>
<comment type="function">
    <text>May be involved in the system for phosphate transport across the cytoplasmic membrane.</text>
</comment>
<comment type="subcellular location">
    <subcellularLocation>
        <location>Cell inner membrane</location>
    </subcellularLocation>
    <text>Found in the cytoplasmic membrane in a form that is closely associated with the cell wall.</text>
</comment>
<comment type="PTM">
    <text>The N-terminus is blocked.</text>
</comment>
<comment type="similarity">
    <text evidence="2">Belongs to the PstS family.</text>
</comment>
<accession>P39665</accession>
<accession>Q31KE4</accession>